<comment type="function">
    <text evidence="6">Acts late in the splicing of pre-mRNA. Required for the splicing of introns with a branch nucleotide to 3'-splice site distance greater or equal to 15. Mediates the release of the spliced mRNA from spliceosomes.</text>
</comment>
<comment type="catalytic activity">
    <reaction>
        <text>ATP + H2O = ADP + phosphate + H(+)</text>
        <dbReference type="Rhea" id="RHEA:13065"/>
        <dbReference type="ChEBI" id="CHEBI:15377"/>
        <dbReference type="ChEBI" id="CHEBI:15378"/>
        <dbReference type="ChEBI" id="CHEBI:30616"/>
        <dbReference type="ChEBI" id="CHEBI:43474"/>
        <dbReference type="ChEBI" id="CHEBI:456216"/>
        <dbReference type="EC" id="3.6.4.13"/>
    </reaction>
</comment>
<comment type="subunit">
    <text evidence="5">Belongs to the 40S cdc5-associated complex (or cwf complex), a spliceosome sub-complex reminiscent of a late-stage spliceosome composed of the U2, U5 and U6 snRNAs and at least brr2, cdc5, cwf2/prp3, cwf3/syf1, cwf4/syf3, cwf5/ecm2, spp42/cwf6, cwf7/spf27, cwf8, cwf9, cwf10, cwf11, cwf12, prp45/cwf13, cwf14, cwf15, cwf16, cwf17, cwf18, cwf19, cwf20, cwf21, cwf22, cwf23, cwf24, cwf25, cwf26, cyp7/cwf27, cwf28, cwf29/ist3, lea1, msl1, prp5/cwf1, prp10, prp12/sap130, prp17, prp22, sap61, sap62, sap114, sap145, slu7, smb1, smd1, smd3, smf1, smg1 and syf2.</text>
</comment>
<comment type="subcellular location">
    <subcellularLocation>
        <location evidence="7">Nucleus</location>
    </subcellularLocation>
</comment>
<comment type="similarity">
    <text evidence="8">Belongs to the DEAD box helicase family. DEAH subfamily. DDX8/PRP22 sub-subfamily.</text>
</comment>
<proteinExistence type="evidence at protein level"/>
<accession>O42643</accession>
<gene>
    <name type="primary">prp22</name>
    <name type="ORF">SPAC10F6.02c</name>
</gene>
<protein>
    <recommendedName>
        <fullName>Pre-mRNA-splicing factor ATP-dependent RNA helicase prp22</fullName>
        <ecNumber>3.6.4.13</ecNumber>
    </recommendedName>
</protein>
<evidence type="ECO:0000255" key="1">
    <source>
        <dbReference type="PROSITE-ProRule" id="PRU00180"/>
    </source>
</evidence>
<evidence type="ECO:0000255" key="2">
    <source>
        <dbReference type="PROSITE-ProRule" id="PRU00541"/>
    </source>
</evidence>
<evidence type="ECO:0000255" key="3">
    <source>
        <dbReference type="PROSITE-ProRule" id="PRU00542"/>
    </source>
</evidence>
<evidence type="ECO:0000256" key="4">
    <source>
        <dbReference type="SAM" id="MobiDB-lite"/>
    </source>
</evidence>
<evidence type="ECO:0000269" key="5">
    <source>
    </source>
</evidence>
<evidence type="ECO:0000269" key="6">
    <source>
    </source>
</evidence>
<evidence type="ECO:0000269" key="7">
    <source>
    </source>
</evidence>
<evidence type="ECO:0000305" key="8"/>
<organism>
    <name type="scientific">Schizosaccharomyces pombe (strain 972 / ATCC 24843)</name>
    <name type="common">Fission yeast</name>
    <dbReference type="NCBI Taxonomy" id="284812"/>
    <lineage>
        <taxon>Eukaryota</taxon>
        <taxon>Fungi</taxon>
        <taxon>Dikarya</taxon>
        <taxon>Ascomycota</taxon>
        <taxon>Taphrinomycotina</taxon>
        <taxon>Schizosaccharomycetes</taxon>
        <taxon>Schizosaccharomycetales</taxon>
        <taxon>Schizosaccharomycetaceae</taxon>
        <taxon>Schizosaccharomyces</taxon>
    </lineage>
</organism>
<dbReference type="EC" id="3.6.4.13"/>
<dbReference type="EMBL" id="CU329670">
    <property type="protein sequence ID" value="CAA15715.1"/>
    <property type="molecule type" value="Genomic_DNA"/>
</dbReference>
<dbReference type="PIR" id="T37496">
    <property type="entry name" value="T37496"/>
</dbReference>
<dbReference type="RefSeq" id="NP_593253.1">
    <property type="nucleotide sequence ID" value="NM_001018650.2"/>
</dbReference>
<dbReference type="SMR" id="O42643"/>
<dbReference type="BioGRID" id="279416">
    <property type="interactions" value="25"/>
</dbReference>
<dbReference type="FunCoup" id="O42643">
    <property type="interactions" value="481"/>
</dbReference>
<dbReference type="IntAct" id="O42643">
    <property type="interactions" value="4"/>
</dbReference>
<dbReference type="STRING" id="284812.O42643"/>
<dbReference type="iPTMnet" id="O42643"/>
<dbReference type="PaxDb" id="4896-SPAC10F6.02c.1"/>
<dbReference type="EnsemblFungi" id="SPAC10F6.02c.1">
    <property type="protein sequence ID" value="SPAC10F6.02c.1:pep"/>
    <property type="gene ID" value="SPAC10F6.02c"/>
</dbReference>
<dbReference type="GeneID" id="2542978"/>
<dbReference type="KEGG" id="spo:2542978"/>
<dbReference type="PomBase" id="SPAC10F6.02c">
    <property type="gene designation" value="prp22"/>
</dbReference>
<dbReference type="VEuPathDB" id="FungiDB:SPAC10F6.02c"/>
<dbReference type="eggNOG" id="KOG0922">
    <property type="taxonomic scope" value="Eukaryota"/>
</dbReference>
<dbReference type="HOGENOM" id="CLU_001832_2_3_1"/>
<dbReference type="InParanoid" id="O42643"/>
<dbReference type="OMA" id="MKEVDQV"/>
<dbReference type="PhylomeDB" id="O42643"/>
<dbReference type="PRO" id="PR:O42643"/>
<dbReference type="Proteomes" id="UP000002485">
    <property type="component" value="Chromosome I"/>
</dbReference>
<dbReference type="GO" id="GO:0071013">
    <property type="term" value="C:catalytic step 2 spliceosome"/>
    <property type="evidence" value="ECO:0000318"/>
    <property type="project" value="GO_Central"/>
</dbReference>
<dbReference type="GO" id="GO:0005634">
    <property type="term" value="C:nucleus"/>
    <property type="evidence" value="ECO:0007005"/>
    <property type="project" value="PomBase"/>
</dbReference>
<dbReference type="GO" id="GO:0071014">
    <property type="term" value="C:post-mRNA release spliceosomal complex"/>
    <property type="evidence" value="ECO:0000314"/>
    <property type="project" value="PomBase"/>
</dbReference>
<dbReference type="GO" id="GO:0005681">
    <property type="term" value="C:spliceosomal complex"/>
    <property type="evidence" value="ECO:0000314"/>
    <property type="project" value="PomBase"/>
</dbReference>
<dbReference type="GO" id="GO:0005684">
    <property type="term" value="C:U2-type spliceosomal complex"/>
    <property type="evidence" value="ECO:0000314"/>
    <property type="project" value="PomBase"/>
</dbReference>
<dbReference type="GO" id="GO:0005524">
    <property type="term" value="F:ATP binding"/>
    <property type="evidence" value="ECO:0007669"/>
    <property type="project" value="UniProtKB-KW"/>
</dbReference>
<dbReference type="GO" id="GO:0016887">
    <property type="term" value="F:ATP hydrolysis activity"/>
    <property type="evidence" value="ECO:0007669"/>
    <property type="project" value="RHEA"/>
</dbReference>
<dbReference type="GO" id="GO:0003723">
    <property type="term" value="F:RNA binding"/>
    <property type="evidence" value="ECO:0000318"/>
    <property type="project" value="GO_Central"/>
</dbReference>
<dbReference type="GO" id="GO:0003724">
    <property type="term" value="F:RNA helicase activity"/>
    <property type="evidence" value="ECO:0000318"/>
    <property type="project" value="GO_Central"/>
</dbReference>
<dbReference type="GO" id="GO:0045292">
    <property type="term" value="P:mRNA cis splicing, via spliceosome"/>
    <property type="evidence" value="ECO:0000269"/>
    <property type="project" value="PomBase"/>
</dbReference>
<dbReference type="GO" id="GO:0000398">
    <property type="term" value="P:mRNA splicing, via spliceosome"/>
    <property type="evidence" value="ECO:0000318"/>
    <property type="project" value="GO_Central"/>
</dbReference>
<dbReference type="GO" id="GO:0000390">
    <property type="term" value="P:spliceosomal complex disassembly"/>
    <property type="evidence" value="ECO:0000250"/>
    <property type="project" value="PomBase"/>
</dbReference>
<dbReference type="CDD" id="cd17971">
    <property type="entry name" value="DEXHc_DHX8"/>
    <property type="match status" value="1"/>
</dbReference>
<dbReference type="CDD" id="cd21691">
    <property type="entry name" value="GH2-like_DHX8"/>
    <property type="match status" value="1"/>
</dbReference>
<dbReference type="CDD" id="cd05684">
    <property type="entry name" value="S1_DHX8_helicase"/>
    <property type="match status" value="1"/>
</dbReference>
<dbReference type="CDD" id="cd18791">
    <property type="entry name" value="SF2_C_RHA"/>
    <property type="match status" value="1"/>
</dbReference>
<dbReference type="FunFam" id="2.40.50.140:FF:000061">
    <property type="entry name" value="ATP-dependent RNA helicase DHX8"/>
    <property type="match status" value="1"/>
</dbReference>
<dbReference type="FunFam" id="1.20.120.1080:FF:000001">
    <property type="entry name" value="Pre-mRNA-splicing factor ATP-dependent RNA helicase"/>
    <property type="match status" value="1"/>
</dbReference>
<dbReference type="FunFam" id="3.40.50.300:FF:000101">
    <property type="entry name" value="Pre-mRNA-splicing factor ATP-dependent RNA helicase"/>
    <property type="match status" value="1"/>
</dbReference>
<dbReference type="FunFam" id="3.40.50.300:FF:000191">
    <property type="entry name" value="Pre-mRNA-splicing factor ATP-dependent RNA helicase"/>
    <property type="match status" value="1"/>
</dbReference>
<dbReference type="Gene3D" id="1.20.120.1080">
    <property type="match status" value="1"/>
</dbReference>
<dbReference type="Gene3D" id="2.40.50.140">
    <property type="entry name" value="Nucleic acid-binding proteins"/>
    <property type="match status" value="1"/>
</dbReference>
<dbReference type="Gene3D" id="3.40.50.300">
    <property type="entry name" value="P-loop containing nucleotide triphosphate hydrolases"/>
    <property type="match status" value="2"/>
</dbReference>
<dbReference type="InterPro" id="IPR011709">
    <property type="entry name" value="DEAD-box_helicase_OB_fold"/>
</dbReference>
<dbReference type="InterPro" id="IPR011545">
    <property type="entry name" value="DEAD/DEAH_box_helicase_dom"/>
</dbReference>
<dbReference type="InterPro" id="IPR044762">
    <property type="entry name" value="DHX8/Prp22_DEXHc"/>
</dbReference>
<dbReference type="InterPro" id="IPR049588">
    <property type="entry name" value="DHX8_GH2-like"/>
</dbReference>
<dbReference type="InterPro" id="IPR002464">
    <property type="entry name" value="DNA/RNA_helicase_DEAH_CS"/>
</dbReference>
<dbReference type="InterPro" id="IPR048333">
    <property type="entry name" value="HA2_WH"/>
</dbReference>
<dbReference type="InterPro" id="IPR007502">
    <property type="entry name" value="Helicase-assoc_dom"/>
</dbReference>
<dbReference type="InterPro" id="IPR014001">
    <property type="entry name" value="Helicase_ATP-bd"/>
</dbReference>
<dbReference type="InterPro" id="IPR001650">
    <property type="entry name" value="Helicase_C-like"/>
</dbReference>
<dbReference type="InterPro" id="IPR012340">
    <property type="entry name" value="NA-bd_OB-fold"/>
</dbReference>
<dbReference type="InterPro" id="IPR027417">
    <property type="entry name" value="P-loop_NTPase"/>
</dbReference>
<dbReference type="InterPro" id="IPR049621">
    <property type="entry name" value="S1_DHX8_helicase"/>
</dbReference>
<dbReference type="InterPro" id="IPR003029">
    <property type="entry name" value="S1_domain"/>
</dbReference>
<dbReference type="PANTHER" id="PTHR18934">
    <property type="entry name" value="ATP-DEPENDENT RNA HELICASE"/>
    <property type="match status" value="1"/>
</dbReference>
<dbReference type="PANTHER" id="PTHR18934:SF85">
    <property type="entry name" value="ATP-DEPENDENT RNA HELICASE DHX8"/>
    <property type="match status" value="1"/>
</dbReference>
<dbReference type="Pfam" id="PF00270">
    <property type="entry name" value="DEAD"/>
    <property type="match status" value="1"/>
</dbReference>
<dbReference type="Pfam" id="PF21010">
    <property type="entry name" value="HA2_C"/>
    <property type="match status" value="1"/>
</dbReference>
<dbReference type="Pfam" id="PF04408">
    <property type="entry name" value="HA2_N"/>
    <property type="match status" value="1"/>
</dbReference>
<dbReference type="Pfam" id="PF00271">
    <property type="entry name" value="Helicase_C"/>
    <property type="match status" value="1"/>
</dbReference>
<dbReference type="Pfam" id="PF07717">
    <property type="entry name" value="OB_NTP_bind"/>
    <property type="match status" value="1"/>
</dbReference>
<dbReference type="Pfam" id="PF00575">
    <property type="entry name" value="S1"/>
    <property type="match status" value="1"/>
</dbReference>
<dbReference type="SMART" id="SM00487">
    <property type="entry name" value="DEXDc"/>
    <property type="match status" value="1"/>
</dbReference>
<dbReference type="SMART" id="SM00847">
    <property type="entry name" value="HA2"/>
    <property type="match status" value="1"/>
</dbReference>
<dbReference type="SMART" id="SM00490">
    <property type="entry name" value="HELICc"/>
    <property type="match status" value="1"/>
</dbReference>
<dbReference type="SMART" id="SM00316">
    <property type="entry name" value="S1"/>
    <property type="match status" value="1"/>
</dbReference>
<dbReference type="SUPFAM" id="SSF50249">
    <property type="entry name" value="Nucleic acid-binding proteins"/>
    <property type="match status" value="1"/>
</dbReference>
<dbReference type="SUPFAM" id="SSF52540">
    <property type="entry name" value="P-loop containing nucleoside triphosphate hydrolases"/>
    <property type="match status" value="1"/>
</dbReference>
<dbReference type="PROSITE" id="PS00690">
    <property type="entry name" value="DEAH_ATP_HELICASE"/>
    <property type="match status" value="1"/>
</dbReference>
<dbReference type="PROSITE" id="PS51192">
    <property type="entry name" value="HELICASE_ATP_BIND_1"/>
    <property type="match status" value="1"/>
</dbReference>
<dbReference type="PROSITE" id="PS51194">
    <property type="entry name" value="HELICASE_CTER"/>
    <property type="match status" value="1"/>
</dbReference>
<dbReference type="PROSITE" id="PS50126">
    <property type="entry name" value="S1"/>
    <property type="match status" value="1"/>
</dbReference>
<feature type="chain" id="PRO_0000055134" description="Pre-mRNA-splicing factor ATP-dependent RNA helicase prp22">
    <location>
        <begin position="1"/>
        <end position="1168"/>
    </location>
</feature>
<feature type="domain" description="S1 motif" evidence="1">
    <location>
        <begin position="207"/>
        <end position="280"/>
    </location>
</feature>
<feature type="domain" description="Helicase ATP-binding" evidence="2">
    <location>
        <begin position="520"/>
        <end position="684"/>
    </location>
</feature>
<feature type="domain" description="Helicase C-terminal" evidence="3">
    <location>
        <begin position="702"/>
        <end position="882"/>
    </location>
</feature>
<feature type="region of interest" description="Disordered" evidence="4">
    <location>
        <begin position="77"/>
        <end position="100"/>
    </location>
</feature>
<feature type="region of interest" description="Disordered" evidence="4">
    <location>
        <begin position="144"/>
        <end position="197"/>
    </location>
</feature>
<feature type="region of interest" description="Disordered" evidence="4">
    <location>
        <begin position="287"/>
        <end position="314"/>
    </location>
</feature>
<feature type="short sequence motif" description="DEAH box">
    <location>
        <begin position="631"/>
        <end position="634"/>
    </location>
</feature>
<feature type="compositionally biased region" description="Low complexity" evidence="4">
    <location>
        <begin position="84"/>
        <end position="94"/>
    </location>
</feature>
<feature type="compositionally biased region" description="Basic and acidic residues" evidence="4">
    <location>
        <begin position="149"/>
        <end position="173"/>
    </location>
</feature>
<feature type="compositionally biased region" description="Low complexity" evidence="4">
    <location>
        <begin position="184"/>
        <end position="197"/>
    </location>
</feature>
<feature type="binding site" evidence="2">
    <location>
        <begin position="533"/>
        <end position="540"/>
    </location>
    <ligand>
        <name>ATP</name>
        <dbReference type="ChEBI" id="CHEBI:30616"/>
    </ligand>
</feature>
<name>PRP22_SCHPO</name>
<reference key="1">
    <citation type="journal article" date="2002" name="Nature">
        <title>The genome sequence of Schizosaccharomyces pombe.</title>
        <authorList>
            <person name="Wood V."/>
            <person name="Gwilliam R."/>
            <person name="Rajandream M.A."/>
            <person name="Lyne M.H."/>
            <person name="Lyne R."/>
            <person name="Stewart A."/>
            <person name="Sgouros J.G."/>
            <person name="Peat N."/>
            <person name="Hayles J."/>
            <person name="Baker S.G."/>
            <person name="Basham D."/>
            <person name="Bowman S."/>
            <person name="Brooks K."/>
            <person name="Brown D."/>
            <person name="Brown S."/>
            <person name="Chillingworth T."/>
            <person name="Churcher C.M."/>
            <person name="Collins M."/>
            <person name="Connor R."/>
            <person name="Cronin A."/>
            <person name="Davis P."/>
            <person name="Feltwell T."/>
            <person name="Fraser A."/>
            <person name="Gentles S."/>
            <person name="Goble A."/>
            <person name="Hamlin N."/>
            <person name="Harris D.E."/>
            <person name="Hidalgo J."/>
            <person name="Hodgson G."/>
            <person name="Holroyd S."/>
            <person name="Hornsby T."/>
            <person name="Howarth S."/>
            <person name="Huckle E.J."/>
            <person name="Hunt S."/>
            <person name="Jagels K."/>
            <person name="James K.D."/>
            <person name="Jones L."/>
            <person name="Jones M."/>
            <person name="Leather S."/>
            <person name="McDonald S."/>
            <person name="McLean J."/>
            <person name="Mooney P."/>
            <person name="Moule S."/>
            <person name="Mungall K.L."/>
            <person name="Murphy L.D."/>
            <person name="Niblett D."/>
            <person name="Odell C."/>
            <person name="Oliver K."/>
            <person name="O'Neil S."/>
            <person name="Pearson D."/>
            <person name="Quail M.A."/>
            <person name="Rabbinowitsch E."/>
            <person name="Rutherford K.M."/>
            <person name="Rutter S."/>
            <person name="Saunders D."/>
            <person name="Seeger K."/>
            <person name="Sharp S."/>
            <person name="Skelton J."/>
            <person name="Simmonds M.N."/>
            <person name="Squares R."/>
            <person name="Squares S."/>
            <person name="Stevens K."/>
            <person name="Taylor K."/>
            <person name="Taylor R.G."/>
            <person name="Tivey A."/>
            <person name="Walsh S.V."/>
            <person name="Warren T."/>
            <person name="Whitehead S."/>
            <person name="Woodward J.R."/>
            <person name="Volckaert G."/>
            <person name="Aert R."/>
            <person name="Robben J."/>
            <person name="Grymonprez B."/>
            <person name="Weltjens I."/>
            <person name="Vanstreels E."/>
            <person name="Rieger M."/>
            <person name="Schaefer M."/>
            <person name="Mueller-Auer S."/>
            <person name="Gabel C."/>
            <person name="Fuchs M."/>
            <person name="Duesterhoeft A."/>
            <person name="Fritzc C."/>
            <person name="Holzer E."/>
            <person name="Moestl D."/>
            <person name="Hilbert H."/>
            <person name="Borzym K."/>
            <person name="Langer I."/>
            <person name="Beck A."/>
            <person name="Lehrach H."/>
            <person name="Reinhardt R."/>
            <person name="Pohl T.M."/>
            <person name="Eger P."/>
            <person name="Zimmermann W."/>
            <person name="Wedler H."/>
            <person name="Wambutt R."/>
            <person name="Purnelle B."/>
            <person name="Goffeau A."/>
            <person name="Cadieu E."/>
            <person name="Dreano S."/>
            <person name="Gloux S."/>
            <person name="Lelaure V."/>
            <person name="Mottier S."/>
            <person name="Galibert F."/>
            <person name="Aves S.J."/>
            <person name="Xiang Z."/>
            <person name="Hunt C."/>
            <person name="Moore K."/>
            <person name="Hurst S.M."/>
            <person name="Lucas M."/>
            <person name="Rochet M."/>
            <person name="Gaillardin C."/>
            <person name="Tallada V.A."/>
            <person name="Garzon A."/>
            <person name="Thode G."/>
            <person name="Daga R.R."/>
            <person name="Cruzado L."/>
            <person name="Jimenez J."/>
            <person name="Sanchez M."/>
            <person name="del Rey F."/>
            <person name="Benito J."/>
            <person name="Dominguez A."/>
            <person name="Revuelta J.L."/>
            <person name="Moreno S."/>
            <person name="Armstrong J."/>
            <person name="Forsburg S.L."/>
            <person name="Cerutti L."/>
            <person name="Lowe T."/>
            <person name="McCombie W.R."/>
            <person name="Paulsen I."/>
            <person name="Potashkin J."/>
            <person name="Shpakovski G.V."/>
            <person name="Ussery D."/>
            <person name="Barrell B.G."/>
            <person name="Nurse P."/>
        </authorList>
    </citation>
    <scope>NUCLEOTIDE SEQUENCE [LARGE SCALE GENOMIC DNA]</scope>
    <source>
        <strain>972 / ATCC 24843</strain>
    </source>
</reference>
<reference key="2">
    <citation type="journal article" date="2004" name="J. Biol. Chem.">
        <title>Genome-wide analysis of pre-mRNA splicing: intron features govern the requirement for the second-step factor, Prp17 in Saccharomyces cerevisiae and Schizosaccharomyces pombe.</title>
        <authorList>
            <person name="Sapra A.K."/>
            <person name="Arava Y."/>
            <person name="Khandelia P."/>
            <person name="Vijayraghavan U."/>
        </authorList>
    </citation>
    <scope>FUNCTION</scope>
</reference>
<reference key="3">
    <citation type="journal article" date="2006" name="Nat. Biotechnol.">
        <title>ORFeome cloning and global analysis of protein localization in the fission yeast Schizosaccharomyces pombe.</title>
        <authorList>
            <person name="Matsuyama A."/>
            <person name="Arai R."/>
            <person name="Yashiroda Y."/>
            <person name="Shirai A."/>
            <person name="Kamata A."/>
            <person name="Sekido S."/>
            <person name="Kobayashi Y."/>
            <person name="Hashimoto A."/>
            <person name="Hamamoto M."/>
            <person name="Hiraoka Y."/>
            <person name="Horinouchi S."/>
            <person name="Yoshida M."/>
        </authorList>
    </citation>
    <scope>SUBCELLULAR LOCATION [LARGE SCALE ANALYSIS]</scope>
</reference>
<reference key="4">
    <citation type="journal article" date="2002" name="Mol. Cell. Biol.">
        <title>Proteomics analysis reveals stable multiprotein complexes in both fission and budding yeasts containing Myb-related Cdc5p/Cef1p, novel pre-mRNA splicing factors, and snRNAs.</title>
        <authorList>
            <person name="Ohi M.D."/>
            <person name="Link A.J."/>
            <person name="Ren L."/>
            <person name="Jennings J.L."/>
            <person name="McDonald W.H."/>
            <person name="Gould K.L."/>
        </authorList>
    </citation>
    <scope>IDENTIFICATION IN THE CWF COMPLEX</scope>
    <scope>IDENTIFICATION BY MASS SPECTROMETRY</scope>
</reference>
<keyword id="KW-0067">ATP-binding</keyword>
<keyword id="KW-0347">Helicase</keyword>
<keyword id="KW-0378">Hydrolase</keyword>
<keyword id="KW-0507">mRNA processing</keyword>
<keyword id="KW-0508">mRNA splicing</keyword>
<keyword id="KW-0547">Nucleotide-binding</keyword>
<keyword id="KW-0539">Nucleus</keyword>
<keyword id="KW-1185">Reference proteome</keyword>
<sequence length="1168" mass="131492">MDDLKELEYLSLVSKVASEIRNHTGIDDNTLAEFIINLHDQSKNYDEFKNNVLSCGGEFTDSFLQNISRLIKEIKPKDDIPTDNVNNGSNSVNGASHDLDSKDVDKQHQRKMFPGLSIPNSTNNLRDRPALMDNAMDELEELSTLAKTRRNDRDSRRDERHYLNGIRERRERSISPSFSHHSRTSISGQSHSSRSSRGPLLNAPTLYGIYSGVVSGIKDFGAFVTLDGFRKRTDGLVHISNIQLNGRLDHPSEAVSYGQPVFVKVIRIDESAKRISLSMKEVNQVTGEDLNPDQVSRSTKKGSGANAIPLSAQNSEIGHVNPLETFTSNGRKRLTSPEIWELQQLAASGAISATDIPELNDGFNTNNAAEINPEDDEDVEIELREEEPGFLAGQTKVSLKLSPIKVVKAPDGSLSRAAMQGQILANDRREIRQKEAKLKSEQEMEKQDLSLSWQDTMSNPQDRKFAQDVRDSAARQLTSETPSWRQATRNANISYGKRTTLSMKEQREGLPVFKLRKQFLEAVSKNQILVLLGETGSGKTTQITQYLAEEGYTSDSKMIGCTQPRRVAAMSVAKRVAEEVGCRVGEEVGYTIRFEDKTSRMTQIKYMTDGMLQRECLVDPLLSKYSVIILDEAHERTVATDVLFGLLKGTVLKRPDLKLIVTSATLDAERFSSYFYKCPIFTIPGRSYPVEIMYTKQPEADYLDAALMTVMQIHLSEGPGDILVFLTGQEEIDTSCEILYERSKMLGDSIPELVILPVYSALPSEIQSRIFEPAPPGGRKVVIATNIAETSLTIDGIYYVVDPGFVKQSCFDPKLGMDSLIVTPISQAQARQRSGRAGRTGPGKCYRLYTESAYRNEMLPSPIPEIQRQNLSHTILMLKAMGINDLLNFDFMDPPPAQTMIAALQNLYALSALDDEGLLTPLGRKMADFPMEPQLSKVLITSVELGCSEEMLSIIAMLSVPNIWSRPREKQQEADRQRAQFANPESDHLTLLNVYTTWKMNRCSDNWCYEHYIQARGMRRAEDVRKQLIRLMDRYRHPVVSCGRKRELILRALCSGYFTNVAKRDSHEGCYKTIVENAPVYMHPSGVLFGKAAEWVIYHELIQTSKEYMHTVSTVNPKWLVEVAPTFFKFANANQVSKTKKNLKVLPLYNRFEKPDEWRISKQRKGGR</sequence>